<dbReference type="EC" id="2.5.1.145" evidence="1"/>
<dbReference type="EMBL" id="CU928162">
    <property type="protein sequence ID" value="CAR09444.2"/>
    <property type="molecule type" value="Genomic_DNA"/>
</dbReference>
<dbReference type="RefSeq" id="WP_000204658.1">
    <property type="nucleotide sequence ID" value="NC_011745.1"/>
</dbReference>
<dbReference type="SMR" id="B7MZC7"/>
<dbReference type="GeneID" id="93779170"/>
<dbReference type="KEGG" id="ecq:ECED1_3284"/>
<dbReference type="HOGENOM" id="CLU_013386_1_0_6"/>
<dbReference type="UniPathway" id="UPA00664"/>
<dbReference type="Proteomes" id="UP000000748">
    <property type="component" value="Chromosome"/>
</dbReference>
<dbReference type="GO" id="GO:0005886">
    <property type="term" value="C:plasma membrane"/>
    <property type="evidence" value="ECO:0007669"/>
    <property type="project" value="UniProtKB-SubCell"/>
</dbReference>
<dbReference type="GO" id="GO:0008961">
    <property type="term" value="F:phosphatidylglycerol-prolipoprotein diacylglyceryl transferase activity"/>
    <property type="evidence" value="ECO:0007669"/>
    <property type="project" value="UniProtKB-UniRule"/>
</dbReference>
<dbReference type="GO" id="GO:0042158">
    <property type="term" value="P:lipoprotein biosynthetic process"/>
    <property type="evidence" value="ECO:0007669"/>
    <property type="project" value="UniProtKB-UniRule"/>
</dbReference>
<dbReference type="HAMAP" id="MF_01147">
    <property type="entry name" value="Lgt"/>
    <property type="match status" value="1"/>
</dbReference>
<dbReference type="InterPro" id="IPR001640">
    <property type="entry name" value="Lgt"/>
</dbReference>
<dbReference type="NCBIfam" id="TIGR00544">
    <property type="entry name" value="lgt"/>
    <property type="match status" value="1"/>
</dbReference>
<dbReference type="PANTHER" id="PTHR30589:SF0">
    <property type="entry name" value="PHOSPHATIDYLGLYCEROL--PROLIPOPROTEIN DIACYLGLYCERYL TRANSFERASE"/>
    <property type="match status" value="1"/>
</dbReference>
<dbReference type="PANTHER" id="PTHR30589">
    <property type="entry name" value="PROLIPOPROTEIN DIACYLGLYCERYL TRANSFERASE"/>
    <property type="match status" value="1"/>
</dbReference>
<dbReference type="Pfam" id="PF01790">
    <property type="entry name" value="LGT"/>
    <property type="match status" value="1"/>
</dbReference>
<dbReference type="PROSITE" id="PS01311">
    <property type="entry name" value="LGT"/>
    <property type="match status" value="1"/>
</dbReference>
<reference key="1">
    <citation type="journal article" date="2009" name="PLoS Genet.">
        <title>Organised genome dynamics in the Escherichia coli species results in highly diverse adaptive paths.</title>
        <authorList>
            <person name="Touchon M."/>
            <person name="Hoede C."/>
            <person name="Tenaillon O."/>
            <person name="Barbe V."/>
            <person name="Baeriswyl S."/>
            <person name="Bidet P."/>
            <person name="Bingen E."/>
            <person name="Bonacorsi S."/>
            <person name="Bouchier C."/>
            <person name="Bouvet O."/>
            <person name="Calteau A."/>
            <person name="Chiapello H."/>
            <person name="Clermont O."/>
            <person name="Cruveiller S."/>
            <person name="Danchin A."/>
            <person name="Diard M."/>
            <person name="Dossat C."/>
            <person name="Karoui M.E."/>
            <person name="Frapy E."/>
            <person name="Garry L."/>
            <person name="Ghigo J.M."/>
            <person name="Gilles A.M."/>
            <person name="Johnson J."/>
            <person name="Le Bouguenec C."/>
            <person name="Lescat M."/>
            <person name="Mangenot S."/>
            <person name="Martinez-Jehanne V."/>
            <person name="Matic I."/>
            <person name="Nassif X."/>
            <person name="Oztas S."/>
            <person name="Petit M.A."/>
            <person name="Pichon C."/>
            <person name="Rouy Z."/>
            <person name="Ruf C.S."/>
            <person name="Schneider D."/>
            <person name="Tourret J."/>
            <person name="Vacherie B."/>
            <person name="Vallenet D."/>
            <person name="Medigue C."/>
            <person name="Rocha E.P.C."/>
            <person name="Denamur E."/>
        </authorList>
    </citation>
    <scope>NUCLEOTIDE SEQUENCE [LARGE SCALE GENOMIC DNA]</scope>
    <source>
        <strain>ED1a</strain>
    </source>
</reference>
<accession>B7MZC7</accession>
<sequence>MTSSYLHFPEFDPVIFSIGPVALHWYGLMYLVGFIFAMWLATRRANRPGSGWTKNEVENLLYAGFLGVFLGGRIGYVLFYNFPQFMADPLYLFRVWDGGMSFHGGLIGVIVVMIIFARRTKRSFFQVSDFIAPLIPFGLGAGRLGNFINGELWGRVDPNFPFAMLFPGSRTEDILLLQTNPQWQSIFDTYGVLPRHPSQLYELLLEGVVLFIILNLYIRKPRPMGAVSGLFLIGYGAFRIIVEFFRQPDAQFTGAWVQYISMGQILSIPMIVAGVIMMVWAYRRSPQQHVS</sequence>
<feature type="chain" id="PRO_1000164138" description="Phosphatidylglycerol--prolipoprotein diacylglyceryl transferase">
    <location>
        <begin position="1"/>
        <end position="291"/>
    </location>
</feature>
<feature type="transmembrane region" description="Helical" evidence="1">
    <location>
        <begin position="21"/>
        <end position="41"/>
    </location>
</feature>
<feature type="transmembrane region" description="Helical" evidence="1">
    <location>
        <begin position="60"/>
        <end position="80"/>
    </location>
</feature>
<feature type="transmembrane region" description="Helical" evidence="1">
    <location>
        <begin position="96"/>
        <end position="116"/>
    </location>
</feature>
<feature type="transmembrane region" description="Helical" evidence="1">
    <location>
        <begin position="225"/>
        <end position="245"/>
    </location>
</feature>
<feature type="transmembrane region" description="Helical" evidence="1">
    <location>
        <begin position="260"/>
        <end position="280"/>
    </location>
</feature>
<feature type="binding site" evidence="1">
    <location>
        <position position="143"/>
    </location>
    <ligand>
        <name>a 1,2-diacyl-sn-glycero-3-phospho-(1'-sn-glycerol)</name>
        <dbReference type="ChEBI" id="CHEBI:64716"/>
    </ligand>
</feature>
<proteinExistence type="inferred from homology"/>
<protein>
    <recommendedName>
        <fullName evidence="1">Phosphatidylglycerol--prolipoprotein diacylglyceryl transferase</fullName>
        <ecNumber evidence="1">2.5.1.145</ecNumber>
    </recommendedName>
</protein>
<organism>
    <name type="scientific">Escherichia coli O81 (strain ED1a)</name>
    <dbReference type="NCBI Taxonomy" id="585397"/>
    <lineage>
        <taxon>Bacteria</taxon>
        <taxon>Pseudomonadati</taxon>
        <taxon>Pseudomonadota</taxon>
        <taxon>Gammaproteobacteria</taxon>
        <taxon>Enterobacterales</taxon>
        <taxon>Enterobacteriaceae</taxon>
        <taxon>Escherichia</taxon>
    </lineage>
</organism>
<gene>
    <name evidence="1" type="primary">lgt</name>
    <name type="ordered locus">ECED1_3284</name>
</gene>
<keyword id="KW-0997">Cell inner membrane</keyword>
<keyword id="KW-1003">Cell membrane</keyword>
<keyword id="KW-0472">Membrane</keyword>
<keyword id="KW-0808">Transferase</keyword>
<keyword id="KW-0812">Transmembrane</keyword>
<keyword id="KW-1133">Transmembrane helix</keyword>
<comment type="function">
    <text evidence="1">Catalyzes the transfer of the diacylglyceryl group from phosphatidylglycerol to the sulfhydryl group of the N-terminal cysteine of a prolipoprotein, the first step in the formation of mature lipoproteins.</text>
</comment>
<comment type="catalytic activity">
    <reaction evidence="1">
        <text>L-cysteinyl-[prolipoprotein] + a 1,2-diacyl-sn-glycero-3-phospho-(1'-sn-glycerol) = an S-1,2-diacyl-sn-glyceryl-L-cysteinyl-[prolipoprotein] + sn-glycerol 1-phosphate + H(+)</text>
        <dbReference type="Rhea" id="RHEA:56712"/>
        <dbReference type="Rhea" id="RHEA-COMP:14679"/>
        <dbReference type="Rhea" id="RHEA-COMP:14680"/>
        <dbReference type="ChEBI" id="CHEBI:15378"/>
        <dbReference type="ChEBI" id="CHEBI:29950"/>
        <dbReference type="ChEBI" id="CHEBI:57685"/>
        <dbReference type="ChEBI" id="CHEBI:64716"/>
        <dbReference type="ChEBI" id="CHEBI:140658"/>
        <dbReference type="EC" id="2.5.1.145"/>
    </reaction>
</comment>
<comment type="pathway">
    <text evidence="1">Protein modification; lipoprotein biosynthesis (diacylglyceryl transfer).</text>
</comment>
<comment type="subcellular location">
    <subcellularLocation>
        <location evidence="1">Cell inner membrane</location>
        <topology evidence="1">Multi-pass membrane protein</topology>
    </subcellularLocation>
</comment>
<comment type="similarity">
    <text evidence="1">Belongs to the Lgt family.</text>
</comment>
<name>LGT_ECO81</name>
<evidence type="ECO:0000255" key="1">
    <source>
        <dbReference type="HAMAP-Rule" id="MF_01147"/>
    </source>
</evidence>